<sequence length="588" mass="65851">MDANDDPDEDHLTSYDVQLSIQESIEAGKTVFYPERFVPLSDQNRKLVEAIQQGHILELQEYVKYKYALDEADEKGWFPLHEAVVQPIQQILEVVLDASYKTLWEFKTSDGETPLTLAVKAGLVENVRTLLEKGVWPNTKNDKGETPLLLAIKRGSYDMVSALLKHNTSLDQPCVKRWSAMHEAAKQGHKDIIALLLNNGGNVHLKDGFGVTPLGVAAEYGHCDVLEHLIHKGGDVLALADDGASVLFEAAGGGNPDCISLLLEYGGSGNIPNRAGHLPIHRAAYEGHYLALKYLIPVTSKHAIQKSGLTPIHSAADGQNAQCLELLIENGFDVNSLLADHISESYDDERKTALYFAVCNNDILCTEILLAAGADPNLDPLNCLLVAVRANNHEIVRLLLAHGANVNCYFMHVNDTRFPSAIQYALNDEVMLRLLLNNGYQVEMCFECMHGDIFGNSFVWSEIEEEVLPGWTSCVIKDNPFCEFITVPWMKHLVGSVIRVLIDYMDYIPLCAKLKSALEVQREWPEIRQILENPCSLKHLCRLKIRRLMGLQRLCQPTLMEKLSLPPTIQRYILFKEYDLYGQELNLP</sequence>
<dbReference type="EMBL" id="AF541277">
    <property type="protein sequence ID" value="AAN23151.1"/>
    <property type="molecule type" value="Genomic_DNA"/>
</dbReference>
<dbReference type="EMBL" id="AF541269">
    <property type="protein sequence ID" value="AAN23151.1"/>
    <property type="status" value="JOINED"/>
    <property type="molecule type" value="Genomic_DNA"/>
</dbReference>
<dbReference type="EMBL" id="AF541270">
    <property type="protein sequence ID" value="AAN23151.1"/>
    <property type="status" value="JOINED"/>
    <property type="molecule type" value="Genomic_DNA"/>
</dbReference>
<dbReference type="EMBL" id="AF541271">
    <property type="protein sequence ID" value="AAN23151.1"/>
    <property type="status" value="JOINED"/>
    <property type="molecule type" value="Genomic_DNA"/>
</dbReference>
<dbReference type="EMBL" id="AF541272">
    <property type="protein sequence ID" value="AAN23151.1"/>
    <property type="status" value="JOINED"/>
    <property type="molecule type" value="Genomic_DNA"/>
</dbReference>
<dbReference type="EMBL" id="AF541273">
    <property type="protein sequence ID" value="AAN23151.1"/>
    <property type="status" value="JOINED"/>
    <property type="molecule type" value="Genomic_DNA"/>
</dbReference>
<dbReference type="EMBL" id="AF541274">
    <property type="protein sequence ID" value="AAN23151.1"/>
    <property type="status" value="JOINED"/>
    <property type="molecule type" value="Genomic_DNA"/>
</dbReference>
<dbReference type="EMBL" id="AF541275">
    <property type="protein sequence ID" value="AAN23151.1"/>
    <property type="status" value="JOINED"/>
    <property type="molecule type" value="Genomic_DNA"/>
</dbReference>
<dbReference type="EMBL" id="AF541276">
    <property type="protein sequence ID" value="AAN23151.1"/>
    <property type="status" value="JOINED"/>
    <property type="molecule type" value="Genomic_DNA"/>
</dbReference>
<dbReference type="EMBL" id="AF527382">
    <property type="protein sequence ID" value="AAN38732.1"/>
    <property type="molecule type" value="mRNA"/>
</dbReference>
<dbReference type="EMBL" id="BC123763">
    <property type="protein sequence ID" value="AAI23764.1"/>
    <property type="molecule type" value="mRNA"/>
</dbReference>
<dbReference type="RefSeq" id="NP_777112.1">
    <property type="nucleotide sequence ID" value="NM_174687.2"/>
</dbReference>
<dbReference type="RefSeq" id="XP_024846243.1">
    <property type="nucleotide sequence ID" value="XM_024990475.2"/>
</dbReference>
<dbReference type="RefSeq" id="XP_059741395.1">
    <property type="nucleotide sequence ID" value="XM_059885412.1"/>
</dbReference>
<dbReference type="SMR" id="Q8HXA6"/>
<dbReference type="FunCoup" id="Q8HXA6">
    <property type="interactions" value="14"/>
</dbReference>
<dbReference type="STRING" id="9913.ENSBTAP00000002787"/>
<dbReference type="PaxDb" id="9913-ENSBTAP00000002787"/>
<dbReference type="Ensembl" id="ENSBTAT00000002787.6">
    <property type="protein sequence ID" value="ENSBTAP00000002787.4"/>
    <property type="gene ID" value="ENSBTAG00000002151.6"/>
</dbReference>
<dbReference type="GeneID" id="282591"/>
<dbReference type="KEGG" id="bta:282591"/>
<dbReference type="CTD" id="142685"/>
<dbReference type="VEuPathDB" id="HostDB:ENSBTAG00000002151"/>
<dbReference type="VGNC" id="VGNC:26192">
    <property type="gene designation" value="ASB15"/>
</dbReference>
<dbReference type="eggNOG" id="KOG0504">
    <property type="taxonomic scope" value="Eukaryota"/>
</dbReference>
<dbReference type="GeneTree" id="ENSGT00940000157073"/>
<dbReference type="HOGENOM" id="CLU_023739_1_0_1"/>
<dbReference type="InParanoid" id="Q8HXA6"/>
<dbReference type="OMA" id="HVNDTHF"/>
<dbReference type="OrthoDB" id="20872at2759"/>
<dbReference type="TreeFam" id="TF315127"/>
<dbReference type="Reactome" id="R-BTA-8951664">
    <property type="pathway name" value="Neddylation"/>
</dbReference>
<dbReference type="Reactome" id="R-BTA-983168">
    <property type="pathway name" value="Antigen processing: Ubiquitination &amp; Proteasome degradation"/>
</dbReference>
<dbReference type="UniPathway" id="UPA00143"/>
<dbReference type="Proteomes" id="UP000009136">
    <property type="component" value="Chromosome 4"/>
</dbReference>
<dbReference type="Bgee" id="ENSBTAG00000002151">
    <property type="expression patterns" value="Expressed in choroid plexus and 38 other cell types or tissues"/>
</dbReference>
<dbReference type="GO" id="GO:0035556">
    <property type="term" value="P:intracellular signal transduction"/>
    <property type="evidence" value="ECO:0007669"/>
    <property type="project" value="InterPro"/>
</dbReference>
<dbReference type="GO" id="GO:0016567">
    <property type="term" value="P:protein ubiquitination"/>
    <property type="evidence" value="ECO:0007669"/>
    <property type="project" value="UniProtKB-UniPathway"/>
</dbReference>
<dbReference type="FunFam" id="1.10.750.20:FF:000001">
    <property type="entry name" value="Ankyrin repeat and SOCS box containing 1"/>
    <property type="match status" value="1"/>
</dbReference>
<dbReference type="FunFam" id="1.25.40.20:FF:000310">
    <property type="entry name" value="Ankyrin repeat and SOCS box containing 15"/>
    <property type="match status" value="1"/>
</dbReference>
<dbReference type="Gene3D" id="1.25.40.20">
    <property type="entry name" value="Ankyrin repeat-containing domain"/>
    <property type="match status" value="2"/>
</dbReference>
<dbReference type="Gene3D" id="1.10.750.20">
    <property type="entry name" value="SOCS box"/>
    <property type="match status" value="1"/>
</dbReference>
<dbReference type="InterPro" id="IPR002110">
    <property type="entry name" value="Ankyrin_rpt"/>
</dbReference>
<dbReference type="InterPro" id="IPR036770">
    <property type="entry name" value="Ankyrin_rpt-contain_sf"/>
</dbReference>
<dbReference type="InterPro" id="IPR001496">
    <property type="entry name" value="SOCS_box"/>
</dbReference>
<dbReference type="InterPro" id="IPR036036">
    <property type="entry name" value="SOCS_box-like_dom_sf"/>
</dbReference>
<dbReference type="PANTHER" id="PTHR24198">
    <property type="entry name" value="ANKYRIN REPEAT AND PROTEIN KINASE DOMAIN-CONTAINING PROTEIN"/>
    <property type="match status" value="1"/>
</dbReference>
<dbReference type="PANTHER" id="PTHR24198:SF187">
    <property type="entry name" value="ANKYRIN REPEAT AND SOCS BOX CONTAINING 15"/>
    <property type="match status" value="1"/>
</dbReference>
<dbReference type="Pfam" id="PF00023">
    <property type="entry name" value="Ank"/>
    <property type="match status" value="3"/>
</dbReference>
<dbReference type="Pfam" id="PF12796">
    <property type="entry name" value="Ank_2"/>
    <property type="match status" value="2"/>
</dbReference>
<dbReference type="Pfam" id="PF07525">
    <property type="entry name" value="SOCS_box"/>
    <property type="match status" value="1"/>
</dbReference>
<dbReference type="PRINTS" id="PR01415">
    <property type="entry name" value="ANKYRIN"/>
</dbReference>
<dbReference type="SMART" id="SM00248">
    <property type="entry name" value="ANK"/>
    <property type="match status" value="10"/>
</dbReference>
<dbReference type="SMART" id="SM00969">
    <property type="entry name" value="SOCS_box"/>
    <property type="match status" value="1"/>
</dbReference>
<dbReference type="SUPFAM" id="SSF48403">
    <property type="entry name" value="Ankyrin repeat"/>
    <property type="match status" value="1"/>
</dbReference>
<dbReference type="SUPFAM" id="SSF158235">
    <property type="entry name" value="SOCS box-like"/>
    <property type="match status" value="1"/>
</dbReference>
<dbReference type="PROSITE" id="PS50297">
    <property type="entry name" value="ANK_REP_REGION"/>
    <property type="match status" value="1"/>
</dbReference>
<dbReference type="PROSITE" id="PS50088">
    <property type="entry name" value="ANK_REPEAT"/>
    <property type="match status" value="7"/>
</dbReference>
<dbReference type="PROSITE" id="PS50225">
    <property type="entry name" value="SOCS"/>
    <property type="match status" value="1"/>
</dbReference>
<name>ASB15_BOVIN</name>
<organism>
    <name type="scientific">Bos taurus</name>
    <name type="common">Bovine</name>
    <dbReference type="NCBI Taxonomy" id="9913"/>
    <lineage>
        <taxon>Eukaryota</taxon>
        <taxon>Metazoa</taxon>
        <taxon>Chordata</taxon>
        <taxon>Craniata</taxon>
        <taxon>Vertebrata</taxon>
        <taxon>Euteleostomi</taxon>
        <taxon>Mammalia</taxon>
        <taxon>Eutheria</taxon>
        <taxon>Laurasiatheria</taxon>
        <taxon>Artiodactyla</taxon>
        <taxon>Ruminantia</taxon>
        <taxon>Pecora</taxon>
        <taxon>Bovidae</taxon>
        <taxon>Bovinae</taxon>
        <taxon>Bos</taxon>
    </lineage>
</organism>
<evidence type="ECO:0000250" key="1"/>
<evidence type="ECO:0000255" key="2">
    <source>
        <dbReference type="PROSITE-ProRule" id="PRU00194"/>
    </source>
</evidence>
<evidence type="ECO:0000305" key="3"/>
<gene>
    <name type="primary">ASB15</name>
</gene>
<reference key="1">
    <citation type="journal article" date="2003" name="Anim. Genet.">
        <title>Characterization of a bovine gene encoding an ankyrin repeat and SOCS box protein (ASB15).</title>
        <authorList>
            <person name="McDaneld T.G."/>
            <person name="Moody D.E."/>
        </authorList>
    </citation>
    <scope>NUCLEOTIDE SEQUENCE [GENOMIC DNA / MRNA]</scope>
</reference>
<reference key="2">
    <citation type="submission" date="2006-09" db="EMBL/GenBank/DDBJ databases">
        <authorList>
            <consortium name="NIH - Mammalian Gene Collection (MGC) project"/>
        </authorList>
    </citation>
    <scope>NUCLEOTIDE SEQUENCE [LARGE SCALE MRNA]</scope>
    <source>
        <strain>Hereford</strain>
        <tissue>Fetal muscle</tissue>
    </source>
</reference>
<accession>Q8HXA6</accession>
<accession>Q08DG3</accession>
<keyword id="KW-0040">ANK repeat</keyword>
<keyword id="KW-1185">Reference proteome</keyword>
<keyword id="KW-0677">Repeat</keyword>
<keyword id="KW-0833">Ubl conjugation pathway</keyword>
<protein>
    <recommendedName>
        <fullName>Ankyrin repeat and SOCS box protein 15</fullName>
        <shortName>ASB-15</shortName>
    </recommendedName>
</protein>
<comment type="function">
    <text evidence="1">May be a substrate-recognition component of a SCF-like ECS (Elongin-Cullin-SOCS-box protein) E3 ubiquitin-protein ligase complex which mediates the ubiquitination and subsequent proteasomal degradation of target proteins.</text>
</comment>
<comment type="pathway">
    <text>Protein modification; protein ubiquitination.</text>
</comment>
<comment type="domain">
    <text evidence="1">The SOCS box domain mediates the interaction with the Elongin BC complex, an adapter module in different E3 ubiquitin-protein ligase complexes.</text>
</comment>
<comment type="similarity">
    <text evidence="3">Belongs to the ankyrin SOCS box (ASB) family.</text>
</comment>
<feature type="chain" id="PRO_0000066953" description="Ankyrin repeat and SOCS box protein 15">
    <location>
        <begin position="1"/>
        <end position="588"/>
    </location>
</feature>
<feature type="repeat" description="ANK 1">
    <location>
        <begin position="75"/>
        <end position="104"/>
    </location>
</feature>
<feature type="repeat" description="ANK 2">
    <location>
        <begin position="110"/>
        <end position="139"/>
    </location>
</feature>
<feature type="repeat" description="ANK 3">
    <location>
        <begin position="143"/>
        <end position="172"/>
    </location>
</feature>
<feature type="repeat" description="ANK 4">
    <location>
        <begin position="176"/>
        <end position="205"/>
    </location>
</feature>
<feature type="repeat" description="ANK 5">
    <location>
        <begin position="209"/>
        <end position="238"/>
    </location>
</feature>
<feature type="repeat" description="ANK 6">
    <location>
        <begin position="242"/>
        <end position="271"/>
    </location>
</feature>
<feature type="repeat" description="ANK 7">
    <location>
        <begin position="275"/>
        <end position="304"/>
    </location>
</feature>
<feature type="repeat" description="ANK 8">
    <location>
        <begin position="307"/>
        <end position="336"/>
    </location>
</feature>
<feature type="repeat" description="ANK 9">
    <location>
        <begin position="349"/>
        <end position="378"/>
    </location>
</feature>
<feature type="repeat" description="ANK 10">
    <location>
        <begin position="379"/>
        <end position="408"/>
    </location>
</feature>
<feature type="repeat" description="ANK 11">
    <location>
        <begin position="416"/>
        <end position="444"/>
    </location>
</feature>
<feature type="domain" description="SOCS box" evidence="2">
    <location>
        <begin position="524"/>
        <end position="579"/>
    </location>
</feature>
<feature type="sequence conflict" description="In Ref. 1; AAN23151/AAN38732." evidence="3" ref="1">
    <original>E</original>
    <variation>G</variation>
    <location>
        <position position="61"/>
    </location>
</feature>
<proteinExistence type="evidence at transcript level"/>